<gene>
    <name type="primary">KCNJ6</name>
    <name type="synonym">GIRK2</name>
    <name type="synonym">KATP2</name>
    <name type="synonym">KCNJ7</name>
</gene>
<protein>
    <recommendedName>
        <fullName>G protein-activated inward rectifier potassium channel 2</fullName>
        <shortName>GIRK-2</shortName>
    </recommendedName>
    <alternativeName>
        <fullName>Inward rectifier K(+) channel Kir3.2</fullName>
    </alternativeName>
    <alternativeName>
        <fullName>KATP-2</fullName>
    </alternativeName>
    <alternativeName>
        <fullName>Potassium channel, inwardly rectifying subfamily J member 6</fullName>
    </alternativeName>
</protein>
<comment type="function">
    <text evidence="2">Inward rectifier potassium channels are characterized by a greater tendency to allow potassium to flow into the cell rather than out of it. Their voltage dependence is regulated by the concentration of extracellular potassium; as external potassium is raised, the voltage range of the channel opening shifts to more positive voltages. The inward rectification is mainly due to the blockage of outward current by internal magnesium. This potassium channel may be involved in the regulation of insulin secretion by glucose and/or neurotransmitters acting through G-protein-coupled receptors.</text>
</comment>
<comment type="catalytic activity">
    <reaction evidence="2">
        <text>K(+)(in) = K(+)(out)</text>
        <dbReference type="Rhea" id="RHEA:29463"/>
        <dbReference type="ChEBI" id="CHEBI:29103"/>
    </reaction>
</comment>
<comment type="activity regulation">
    <text evidence="4">Activated by phosphatidylinositol 4,5 biphosphate (PtdIns(4,5)P2).</text>
</comment>
<comment type="subunit">
    <text evidence="2 4">Associates with KCNJ3/GIRK1 or KCNJ5/GRIK4 to form a G-protein-activated heteromultimer pore-forming unit. The resulting inward current is much larger. Interacts (via PDZ-binding motif) with SNX27 (via PDZ domain); the interaction is required when endocytosed to prevent degradation in lysosomes and promote recycling to the plasma membrane.</text>
</comment>
<comment type="subcellular location">
    <subcellularLocation>
        <location evidence="5">Membrane</location>
        <topology evidence="5">Multi-pass membrane protein</topology>
    </subcellularLocation>
</comment>
<comment type="tissue specificity">
    <text evidence="7">Expressed in insulin-secreting cells and brain.</text>
</comment>
<comment type="similarity">
    <text evidence="8">Belongs to the inward rectifier-type potassium channel (TC 1.A.2.1) family. KCNJ6 subfamily.</text>
</comment>
<keyword id="KW-0407">Ion channel</keyword>
<keyword id="KW-0406">Ion transport</keyword>
<keyword id="KW-0472">Membrane</keyword>
<keyword id="KW-0597">Phosphoprotein</keyword>
<keyword id="KW-0630">Potassium</keyword>
<keyword id="KW-0633">Potassium transport</keyword>
<keyword id="KW-1185">Reference proteome</keyword>
<keyword id="KW-0812">Transmembrane</keyword>
<keyword id="KW-1133">Transmembrane helix</keyword>
<keyword id="KW-0813">Transport</keyword>
<keyword id="KW-0851">Voltage-gated channel</keyword>
<reference key="1">
    <citation type="journal article" date="1995" name="Diabetes">
        <title>Isolation of a cDNA clone encoding a KATP channel-like protein expressed in insulin-secreting cells, localization of the human gene to chromosome band 21q22.1, and linkage studies with NIDDM.</title>
        <authorList>
            <person name="Tsaur M.-L."/>
            <person name="Menzel S."/>
            <person name="Lai F.-P."/>
            <person name="Espinosa R. III"/>
            <person name="Concannon P."/>
            <person name="Spielman R.S."/>
            <person name="Hanis C.L."/>
            <person name="Cox N.J."/>
            <person name="le Beau M.M."/>
            <person name="German M.S."/>
            <person name="Jan L.Y."/>
            <person name="Bell G.I."/>
            <person name="Stoffel M."/>
        </authorList>
    </citation>
    <scope>NUCLEOTIDE SEQUENCE [MRNA]</scope>
    <scope>TISSUE SPECIFICITY</scope>
    <source>
        <tissue>Insulinoma</tissue>
    </source>
</reference>
<evidence type="ECO:0000250" key="1"/>
<evidence type="ECO:0000250" key="2">
    <source>
        <dbReference type="UniProtKB" id="P48051"/>
    </source>
</evidence>
<evidence type="ECO:0000250" key="3">
    <source>
        <dbReference type="UniProtKB" id="P48542"/>
    </source>
</evidence>
<evidence type="ECO:0000250" key="4">
    <source>
        <dbReference type="UniProtKB" id="P48550"/>
    </source>
</evidence>
<evidence type="ECO:0000255" key="5"/>
<evidence type="ECO:0000256" key="6">
    <source>
        <dbReference type="SAM" id="MobiDB-lite"/>
    </source>
</evidence>
<evidence type="ECO:0000269" key="7">
    <source>
    </source>
</evidence>
<evidence type="ECO:0000305" key="8"/>
<organism>
    <name type="scientific">Mesocricetus auratus</name>
    <name type="common">Golden hamster</name>
    <dbReference type="NCBI Taxonomy" id="10036"/>
    <lineage>
        <taxon>Eukaryota</taxon>
        <taxon>Metazoa</taxon>
        <taxon>Chordata</taxon>
        <taxon>Craniata</taxon>
        <taxon>Vertebrata</taxon>
        <taxon>Euteleostomi</taxon>
        <taxon>Mammalia</taxon>
        <taxon>Eutheria</taxon>
        <taxon>Euarchontoglires</taxon>
        <taxon>Glires</taxon>
        <taxon>Rodentia</taxon>
        <taxon>Myomorpha</taxon>
        <taxon>Muroidea</taxon>
        <taxon>Cricetidae</taxon>
        <taxon>Cricetinae</taxon>
        <taxon>Mesocricetus</taxon>
    </lineage>
</organism>
<accession>P49658</accession>
<proteinExistence type="evidence at transcript level"/>
<name>KCNJ6_MESAU</name>
<sequence length="425" mass="48647">MTMAKLTESMTNVLEGDSMDQDVESPVAIHQPKLPKQARDDLPRHISRDRTKRKIQRYVRKDGKCNVHHGNVRETYRYLTDILTTLVDLKWRFNLLIFVMVYTVTWLFFGMIWWLIAYIRGDMDHVEDPSWTPCVTNLNGFVSAFLFSIETETTIGYGYRVITDKCPEGIILLLIQSVLGSIVNAFMVGCMFVKISQPKKRAETLVFSTHAVISMRDGKLCLMFRVGDLRNSHIVEASIRAKLIKSKQTSEGEFIPLNQTDINVGYYTGDDRLFLVSPLIISHEINQQSPFWEISKAQLPKEELEIVVILEGMVEATGMTCQARSSYITSEILWGYRFTPVLTLEDGFYEVDYNSFHETYETSTPSLSAKELAELANRAELPLSWSVSSKLNQHAELETEEEEKNPEEQTERNGDVANLENESKV</sequence>
<feature type="chain" id="PRO_0000154943" description="G protein-activated inward rectifier potassium channel 2">
    <location>
        <begin position="1"/>
        <end position="425"/>
    </location>
</feature>
<feature type="topological domain" description="Cytoplasmic" evidence="1">
    <location>
        <begin position="1"/>
        <end position="91"/>
    </location>
</feature>
<feature type="transmembrane region" description="Helical; Name=M1" evidence="1">
    <location>
        <begin position="92"/>
        <end position="116"/>
    </location>
</feature>
<feature type="topological domain" description="Extracellular" evidence="1">
    <location>
        <begin position="117"/>
        <end position="140"/>
    </location>
</feature>
<feature type="intramembrane region" description="Helical; Pore-forming; Name=H5" evidence="1">
    <location>
        <begin position="141"/>
        <end position="152"/>
    </location>
</feature>
<feature type="intramembrane region" description="Pore-forming" evidence="1">
    <location>
        <begin position="153"/>
        <end position="159"/>
    </location>
</feature>
<feature type="topological domain" description="Extracellular" evidence="1">
    <location>
        <begin position="160"/>
        <end position="168"/>
    </location>
</feature>
<feature type="transmembrane region" description="Helical; Name=M2" evidence="1">
    <location>
        <begin position="169"/>
        <end position="190"/>
    </location>
</feature>
<feature type="topological domain" description="Cytoplasmic" evidence="1">
    <location>
        <begin position="191"/>
        <end position="425"/>
    </location>
</feature>
<feature type="region of interest" description="Disordered" evidence="6">
    <location>
        <begin position="392"/>
        <end position="425"/>
    </location>
</feature>
<feature type="short sequence motif" description="Selectivity filter" evidence="1">
    <location>
        <begin position="154"/>
        <end position="159"/>
    </location>
</feature>
<feature type="short sequence motif" description="PDZ-binding">
    <location>
        <begin position="422"/>
        <end position="425"/>
    </location>
</feature>
<feature type="site" description="Role in the control of polyamine-mediated channel gating and in the blocking by intracellular magnesium" evidence="1">
    <location>
        <position position="184"/>
    </location>
</feature>
<feature type="modified residue" description="Phosphoserine" evidence="3">
    <location>
        <position position="18"/>
    </location>
</feature>
<feature type="modified residue" description="Phosphoserine" evidence="3">
    <location>
        <position position="25"/>
    </location>
</feature>
<dbReference type="EMBL" id="U21937">
    <property type="protein sequence ID" value="AAA79983.1"/>
    <property type="molecule type" value="mRNA"/>
</dbReference>
<dbReference type="PIR" id="I48202">
    <property type="entry name" value="I48202"/>
</dbReference>
<dbReference type="RefSeq" id="NP_001268770.1">
    <property type="nucleotide sequence ID" value="NM_001281841.1"/>
</dbReference>
<dbReference type="SMR" id="P49658"/>
<dbReference type="STRING" id="10036.ENSMAUP00000010761"/>
<dbReference type="GeneID" id="101823647"/>
<dbReference type="KEGG" id="maua:101823647"/>
<dbReference type="CTD" id="3763"/>
<dbReference type="eggNOG" id="KOG3827">
    <property type="taxonomic scope" value="Eukaryota"/>
</dbReference>
<dbReference type="OrthoDB" id="273257at2759"/>
<dbReference type="PRO" id="PR:P49658"/>
<dbReference type="Proteomes" id="UP000189706">
    <property type="component" value="Unplaced"/>
</dbReference>
<dbReference type="GO" id="GO:0034702">
    <property type="term" value="C:monoatomic ion channel complex"/>
    <property type="evidence" value="ECO:0007669"/>
    <property type="project" value="UniProtKB-KW"/>
</dbReference>
<dbReference type="GO" id="GO:0005886">
    <property type="term" value="C:plasma membrane"/>
    <property type="evidence" value="ECO:0007669"/>
    <property type="project" value="TreeGrafter"/>
</dbReference>
<dbReference type="GO" id="GO:0015467">
    <property type="term" value="F:G-protein activated inward rectifier potassium channel activity"/>
    <property type="evidence" value="ECO:0000250"/>
    <property type="project" value="UniProtKB"/>
</dbReference>
<dbReference type="GO" id="GO:0005242">
    <property type="term" value="F:inward rectifier potassium channel activity"/>
    <property type="evidence" value="ECO:0000250"/>
    <property type="project" value="UniProtKB"/>
</dbReference>
<dbReference type="GO" id="GO:1990573">
    <property type="term" value="P:potassium ion import across plasma membrane"/>
    <property type="evidence" value="ECO:0007669"/>
    <property type="project" value="TreeGrafter"/>
</dbReference>
<dbReference type="GO" id="GO:0034765">
    <property type="term" value="P:regulation of monoatomic ion transmembrane transport"/>
    <property type="evidence" value="ECO:0007669"/>
    <property type="project" value="TreeGrafter"/>
</dbReference>
<dbReference type="FunFam" id="1.10.287.70:FF:000019">
    <property type="entry name" value="G protein-activated inward rectifier potassium channel 1"/>
    <property type="match status" value="1"/>
</dbReference>
<dbReference type="FunFam" id="2.60.40.1400:FF:000005">
    <property type="entry name" value="G protein-activated inward rectifier potassium channel 2"/>
    <property type="match status" value="1"/>
</dbReference>
<dbReference type="Gene3D" id="1.10.287.70">
    <property type="match status" value="1"/>
</dbReference>
<dbReference type="Gene3D" id="2.60.40.1400">
    <property type="entry name" value="G protein-activated inward rectifier potassium channel 1"/>
    <property type="match status" value="1"/>
</dbReference>
<dbReference type="InterPro" id="IPR014756">
    <property type="entry name" value="Ig_E-set"/>
</dbReference>
<dbReference type="InterPro" id="IPR041647">
    <property type="entry name" value="IRK_C"/>
</dbReference>
<dbReference type="InterPro" id="IPR016449">
    <property type="entry name" value="K_chnl_inward-rec_Kir"/>
</dbReference>
<dbReference type="InterPro" id="IPR003275">
    <property type="entry name" value="K_chnl_inward-rec_Kir3.2"/>
</dbReference>
<dbReference type="InterPro" id="IPR013518">
    <property type="entry name" value="K_chnl_inward-rec_Kir_cyto"/>
</dbReference>
<dbReference type="InterPro" id="IPR040445">
    <property type="entry name" value="Kir_TM"/>
</dbReference>
<dbReference type="PANTHER" id="PTHR11767:SF19">
    <property type="entry name" value="G PROTEIN-ACTIVATED INWARD RECTIFIER POTASSIUM CHANNEL 2"/>
    <property type="match status" value="1"/>
</dbReference>
<dbReference type="PANTHER" id="PTHR11767">
    <property type="entry name" value="INWARD RECTIFIER POTASSIUM CHANNEL"/>
    <property type="match status" value="1"/>
</dbReference>
<dbReference type="Pfam" id="PF01007">
    <property type="entry name" value="IRK"/>
    <property type="match status" value="1"/>
</dbReference>
<dbReference type="Pfam" id="PF17655">
    <property type="entry name" value="IRK_C"/>
    <property type="match status" value="1"/>
</dbReference>
<dbReference type="PIRSF" id="PIRSF005465">
    <property type="entry name" value="GIRK_kir"/>
    <property type="match status" value="1"/>
</dbReference>
<dbReference type="PRINTS" id="PR01328">
    <property type="entry name" value="KIR32CHANNEL"/>
</dbReference>
<dbReference type="PRINTS" id="PR01320">
    <property type="entry name" value="KIRCHANNEL"/>
</dbReference>
<dbReference type="SUPFAM" id="SSF81296">
    <property type="entry name" value="E set domains"/>
    <property type="match status" value="1"/>
</dbReference>
<dbReference type="SUPFAM" id="SSF81324">
    <property type="entry name" value="Voltage-gated potassium channels"/>
    <property type="match status" value="1"/>
</dbReference>